<keyword id="KW-0028">Amino-acid biosynthesis</keyword>
<keyword id="KW-0061">Asparagine biosynthesis</keyword>
<keyword id="KW-0067">ATP-binding</keyword>
<keyword id="KW-0963">Cytoplasm</keyword>
<keyword id="KW-0436">Ligase</keyword>
<keyword id="KW-0547">Nucleotide-binding</keyword>
<organism>
    <name type="scientific">Streptococcus equi subsp. zooepidemicus (strain H70)</name>
    <dbReference type="NCBI Taxonomy" id="553483"/>
    <lineage>
        <taxon>Bacteria</taxon>
        <taxon>Bacillati</taxon>
        <taxon>Bacillota</taxon>
        <taxon>Bacilli</taxon>
        <taxon>Lactobacillales</taxon>
        <taxon>Streptococcaceae</taxon>
        <taxon>Streptococcus</taxon>
    </lineage>
</organism>
<feature type="chain" id="PRO_1000212015" description="Aspartate--ammonia ligase">
    <location>
        <begin position="1"/>
        <end position="330"/>
    </location>
</feature>
<proteinExistence type="inferred from homology"/>
<gene>
    <name evidence="1" type="primary">asnA</name>
    <name type="ordered locus">SZO_14180</name>
</gene>
<protein>
    <recommendedName>
        <fullName evidence="1">Aspartate--ammonia ligase</fullName>
        <ecNumber evidence="1">6.3.1.1</ecNumber>
    </recommendedName>
    <alternativeName>
        <fullName evidence="1">Asparagine synthetase A</fullName>
    </alternativeName>
</protein>
<sequence>MKKSFIHQQEEISFVKNTFTQYLIAKLDVVEVQGPILSRVGDGMQDNLSGVENPVSVHVLNIPNATFEVVHSLAKWKRHTLARFGFNEGEGLVVNMKALRPDEDSLDQTHSVYVDQWDWEKVIPDGQRNLAYLKETVETIYKVIRLTELAVEARYDIEAVLPKKITFIHTEELVARYPDLTPKERENAITKEFGAVFLIGIGGVLPDGKPHDGRAPDYDDWTSESENGYHGLNGDILVWNEQLGTAFELSSMGIRVDEEALKRQVDITGDQERLQFDWHKSLLNGLFPLTIGGGIGQSRMAMFLLRKKHIGEVQTSVWPQEVRDTYDNIL</sequence>
<name>ASNA_STRS7</name>
<dbReference type="EC" id="6.3.1.1" evidence="1"/>
<dbReference type="EMBL" id="FM204884">
    <property type="protein sequence ID" value="CAX00020.1"/>
    <property type="molecule type" value="Genomic_DNA"/>
</dbReference>
<dbReference type="SMR" id="C0MD73"/>
<dbReference type="KEGG" id="seq:SZO_14180"/>
<dbReference type="eggNOG" id="COG2502">
    <property type="taxonomic scope" value="Bacteria"/>
</dbReference>
<dbReference type="HOGENOM" id="CLU_071543_0_0_9"/>
<dbReference type="UniPathway" id="UPA00134">
    <property type="reaction ID" value="UER00194"/>
</dbReference>
<dbReference type="Proteomes" id="UP000001368">
    <property type="component" value="Chromosome"/>
</dbReference>
<dbReference type="GO" id="GO:0005829">
    <property type="term" value="C:cytosol"/>
    <property type="evidence" value="ECO:0007669"/>
    <property type="project" value="TreeGrafter"/>
</dbReference>
<dbReference type="GO" id="GO:0004071">
    <property type="term" value="F:aspartate-ammonia ligase activity"/>
    <property type="evidence" value="ECO:0007669"/>
    <property type="project" value="UniProtKB-UniRule"/>
</dbReference>
<dbReference type="GO" id="GO:0005524">
    <property type="term" value="F:ATP binding"/>
    <property type="evidence" value="ECO:0007669"/>
    <property type="project" value="UniProtKB-UniRule"/>
</dbReference>
<dbReference type="GO" id="GO:0140096">
    <property type="term" value="F:catalytic activity, acting on a protein"/>
    <property type="evidence" value="ECO:0007669"/>
    <property type="project" value="UniProtKB-ARBA"/>
</dbReference>
<dbReference type="GO" id="GO:0016740">
    <property type="term" value="F:transferase activity"/>
    <property type="evidence" value="ECO:0007669"/>
    <property type="project" value="UniProtKB-ARBA"/>
</dbReference>
<dbReference type="GO" id="GO:0070981">
    <property type="term" value="P:L-asparagine biosynthetic process"/>
    <property type="evidence" value="ECO:0007669"/>
    <property type="project" value="UniProtKB-UniRule"/>
</dbReference>
<dbReference type="CDD" id="cd00645">
    <property type="entry name" value="AsnA"/>
    <property type="match status" value="1"/>
</dbReference>
<dbReference type="Gene3D" id="3.30.930.10">
    <property type="entry name" value="Bira Bifunctional Protein, Domain 2"/>
    <property type="match status" value="1"/>
</dbReference>
<dbReference type="HAMAP" id="MF_00555">
    <property type="entry name" value="AsnA"/>
    <property type="match status" value="1"/>
</dbReference>
<dbReference type="InterPro" id="IPR006195">
    <property type="entry name" value="aa-tRNA-synth_II"/>
</dbReference>
<dbReference type="InterPro" id="IPR045864">
    <property type="entry name" value="aa-tRNA-synth_II/BPL/LPL"/>
</dbReference>
<dbReference type="InterPro" id="IPR004618">
    <property type="entry name" value="AsnA"/>
</dbReference>
<dbReference type="NCBIfam" id="TIGR00669">
    <property type="entry name" value="asnA"/>
    <property type="match status" value="1"/>
</dbReference>
<dbReference type="PANTHER" id="PTHR30073">
    <property type="entry name" value="ASPARTATE--AMMONIA LIGASE"/>
    <property type="match status" value="1"/>
</dbReference>
<dbReference type="PANTHER" id="PTHR30073:SF5">
    <property type="entry name" value="ASPARTATE--AMMONIA LIGASE"/>
    <property type="match status" value="1"/>
</dbReference>
<dbReference type="Pfam" id="PF03590">
    <property type="entry name" value="AsnA"/>
    <property type="match status" value="1"/>
</dbReference>
<dbReference type="PIRSF" id="PIRSF001555">
    <property type="entry name" value="Asp_ammon_ligase"/>
    <property type="match status" value="1"/>
</dbReference>
<dbReference type="SUPFAM" id="SSF55681">
    <property type="entry name" value="Class II aaRS and biotin synthetases"/>
    <property type="match status" value="1"/>
</dbReference>
<dbReference type="PROSITE" id="PS50862">
    <property type="entry name" value="AA_TRNA_LIGASE_II"/>
    <property type="match status" value="1"/>
</dbReference>
<comment type="catalytic activity">
    <reaction evidence="1">
        <text>L-aspartate + NH4(+) + ATP = L-asparagine + AMP + diphosphate + H(+)</text>
        <dbReference type="Rhea" id="RHEA:11372"/>
        <dbReference type="ChEBI" id="CHEBI:15378"/>
        <dbReference type="ChEBI" id="CHEBI:28938"/>
        <dbReference type="ChEBI" id="CHEBI:29991"/>
        <dbReference type="ChEBI" id="CHEBI:30616"/>
        <dbReference type="ChEBI" id="CHEBI:33019"/>
        <dbReference type="ChEBI" id="CHEBI:58048"/>
        <dbReference type="ChEBI" id="CHEBI:456215"/>
        <dbReference type="EC" id="6.3.1.1"/>
    </reaction>
</comment>
<comment type="pathway">
    <text evidence="1">Amino-acid biosynthesis; L-asparagine biosynthesis; L-asparagine from L-aspartate (ammonia route): step 1/1.</text>
</comment>
<comment type="subcellular location">
    <subcellularLocation>
        <location evidence="1">Cytoplasm</location>
    </subcellularLocation>
</comment>
<comment type="similarity">
    <text evidence="1">Belongs to the class-II aminoacyl-tRNA synthetase family. AsnA subfamily.</text>
</comment>
<accession>C0MD73</accession>
<reference key="1">
    <citation type="journal article" date="2009" name="PLoS Pathog.">
        <title>Genomic evidence for the evolution of Streptococcus equi: host restriction, increased virulence, and genetic exchange with human pathogens.</title>
        <authorList>
            <person name="Holden M.T.G."/>
            <person name="Heather Z."/>
            <person name="Paillot R."/>
            <person name="Steward K.F."/>
            <person name="Webb K."/>
            <person name="Ainslie F."/>
            <person name="Jourdan T."/>
            <person name="Bason N.C."/>
            <person name="Holroyd N.E."/>
            <person name="Mungall K."/>
            <person name="Quail M.A."/>
            <person name="Sanders M."/>
            <person name="Simmonds M."/>
            <person name="Willey D."/>
            <person name="Brooks K."/>
            <person name="Aanensen D.M."/>
            <person name="Spratt B.G."/>
            <person name="Jolley K.A."/>
            <person name="Maiden M.C.J."/>
            <person name="Kehoe M."/>
            <person name="Chanter N."/>
            <person name="Bentley S.D."/>
            <person name="Robinson C."/>
            <person name="Maskell D.J."/>
            <person name="Parkhill J."/>
            <person name="Waller A.S."/>
        </authorList>
    </citation>
    <scope>NUCLEOTIDE SEQUENCE [LARGE SCALE GENOMIC DNA]</scope>
    <source>
        <strain>H70</strain>
    </source>
</reference>
<evidence type="ECO:0000255" key="1">
    <source>
        <dbReference type="HAMAP-Rule" id="MF_00555"/>
    </source>
</evidence>